<protein>
    <recommendedName>
        <fullName evidence="1">1-deoxy-D-xylulose-5-phosphate synthase</fullName>
        <ecNumber evidence="1">2.2.1.7</ecNumber>
    </recommendedName>
    <alternativeName>
        <fullName evidence="1">1-deoxyxylulose-5-phosphate synthase</fullName>
        <shortName evidence="1">DXP synthase</shortName>
        <shortName evidence="1">DXPS</shortName>
    </alternativeName>
</protein>
<dbReference type="EC" id="2.2.1.7" evidence="1"/>
<dbReference type="EMBL" id="BA000004">
    <property type="protein sequence ID" value="BAB06498.1"/>
    <property type="molecule type" value="Genomic_DNA"/>
</dbReference>
<dbReference type="PIR" id="C83997">
    <property type="entry name" value="C83997"/>
</dbReference>
<dbReference type="RefSeq" id="WP_010898927.1">
    <property type="nucleotide sequence ID" value="NC_002570.2"/>
</dbReference>
<dbReference type="SMR" id="Q9K971"/>
<dbReference type="STRING" id="272558.gene:10728679"/>
<dbReference type="GeneID" id="87598297"/>
<dbReference type="KEGG" id="bha:BH2779"/>
<dbReference type="eggNOG" id="COG1154">
    <property type="taxonomic scope" value="Bacteria"/>
</dbReference>
<dbReference type="HOGENOM" id="CLU_009227_1_4_9"/>
<dbReference type="OrthoDB" id="9803371at2"/>
<dbReference type="UniPathway" id="UPA00064">
    <property type="reaction ID" value="UER00091"/>
</dbReference>
<dbReference type="Proteomes" id="UP000001258">
    <property type="component" value="Chromosome"/>
</dbReference>
<dbReference type="GO" id="GO:0005829">
    <property type="term" value="C:cytosol"/>
    <property type="evidence" value="ECO:0007669"/>
    <property type="project" value="TreeGrafter"/>
</dbReference>
<dbReference type="GO" id="GO:0008661">
    <property type="term" value="F:1-deoxy-D-xylulose-5-phosphate synthase activity"/>
    <property type="evidence" value="ECO:0007669"/>
    <property type="project" value="UniProtKB-UniRule"/>
</dbReference>
<dbReference type="GO" id="GO:0000287">
    <property type="term" value="F:magnesium ion binding"/>
    <property type="evidence" value="ECO:0007669"/>
    <property type="project" value="UniProtKB-UniRule"/>
</dbReference>
<dbReference type="GO" id="GO:0030976">
    <property type="term" value="F:thiamine pyrophosphate binding"/>
    <property type="evidence" value="ECO:0007669"/>
    <property type="project" value="UniProtKB-UniRule"/>
</dbReference>
<dbReference type="GO" id="GO:0052865">
    <property type="term" value="P:1-deoxy-D-xylulose 5-phosphate biosynthetic process"/>
    <property type="evidence" value="ECO:0007669"/>
    <property type="project" value="UniProtKB-UniPathway"/>
</dbReference>
<dbReference type="GO" id="GO:0019288">
    <property type="term" value="P:isopentenyl diphosphate biosynthetic process, methylerythritol 4-phosphate pathway"/>
    <property type="evidence" value="ECO:0007669"/>
    <property type="project" value="TreeGrafter"/>
</dbReference>
<dbReference type="GO" id="GO:0016114">
    <property type="term" value="P:terpenoid biosynthetic process"/>
    <property type="evidence" value="ECO:0007669"/>
    <property type="project" value="UniProtKB-UniRule"/>
</dbReference>
<dbReference type="GO" id="GO:0009228">
    <property type="term" value="P:thiamine biosynthetic process"/>
    <property type="evidence" value="ECO:0007669"/>
    <property type="project" value="UniProtKB-UniRule"/>
</dbReference>
<dbReference type="CDD" id="cd02007">
    <property type="entry name" value="TPP_DXS"/>
    <property type="match status" value="1"/>
</dbReference>
<dbReference type="CDD" id="cd07033">
    <property type="entry name" value="TPP_PYR_DXS_TK_like"/>
    <property type="match status" value="1"/>
</dbReference>
<dbReference type="FunFam" id="3.40.50.920:FF:000002">
    <property type="entry name" value="1-deoxy-D-xylulose-5-phosphate synthase"/>
    <property type="match status" value="1"/>
</dbReference>
<dbReference type="FunFam" id="3.40.50.970:FF:000030">
    <property type="entry name" value="1-deoxy-D-xylulose-5-phosphate synthase"/>
    <property type="match status" value="1"/>
</dbReference>
<dbReference type="Gene3D" id="3.40.50.920">
    <property type="match status" value="1"/>
</dbReference>
<dbReference type="Gene3D" id="3.40.50.970">
    <property type="match status" value="2"/>
</dbReference>
<dbReference type="HAMAP" id="MF_00315">
    <property type="entry name" value="DXP_synth"/>
    <property type="match status" value="1"/>
</dbReference>
<dbReference type="InterPro" id="IPR005477">
    <property type="entry name" value="Dxylulose-5-P_synthase"/>
</dbReference>
<dbReference type="InterPro" id="IPR029061">
    <property type="entry name" value="THDP-binding"/>
</dbReference>
<dbReference type="InterPro" id="IPR009014">
    <property type="entry name" value="Transketo_C/PFOR_II"/>
</dbReference>
<dbReference type="InterPro" id="IPR005475">
    <property type="entry name" value="Transketolase-like_Pyr-bd"/>
</dbReference>
<dbReference type="InterPro" id="IPR020826">
    <property type="entry name" value="Transketolase_BS"/>
</dbReference>
<dbReference type="InterPro" id="IPR033248">
    <property type="entry name" value="Transketolase_C"/>
</dbReference>
<dbReference type="InterPro" id="IPR049557">
    <property type="entry name" value="Transketolase_CS"/>
</dbReference>
<dbReference type="NCBIfam" id="TIGR00204">
    <property type="entry name" value="dxs"/>
    <property type="match status" value="1"/>
</dbReference>
<dbReference type="NCBIfam" id="NF003933">
    <property type="entry name" value="PRK05444.2-2"/>
    <property type="match status" value="1"/>
</dbReference>
<dbReference type="PANTHER" id="PTHR43322">
    <property type="entry name" value="1-D-DEOXYXYLULOSE 5-PHOSPHATE SYNTHASE-RELATED"/>
    <property type="match status" value="1"/>
</dbReference>
<dbReference type="PANTHER" id="PTHR43322:SF5">
    <property type="entry name" value="1-DEOXY-D-XYLULOSE-5-PHOSPHATE SYNTHASE, CHLOROPLASTIC"/>
    <property type="match status" value="1"/>
</dbReference>
<dbReference type="Pfam" id="PF13292">
    <property type="entry name" value="DXP_synthase_N"/>
    <property type="match status" value="1"/>
</dbReference>
<dbReference type="Pfam" id="PF02779">
    <property type="entry name" value="Transket_pyr"/>
    <property type="match status" value="1"/>
</dbReference>
<dbReference type="Pfam" id="PF02780">
    <property type="entry name" value="Transketolase_C"/>
    <property type="match status" value="1"/>
</dbReference>
<dbReference type="SMART" id="SM00861">
    <property type="entry name" value="Transket_pyr"/>
    <property type="match status" value="1"/>
</dbReference>
<dbReference type="SUPFAM" id="SSF52518">
    <property type="entry name" value="Thiamin diphosphate-binding fold (THDP-binding)"/>
    <property type="match status" value="2"/>
</dbReference>
<dbReference type="SUPFAM" id="SSF52922">
    <property type="entry name" value="TK C-terminal domain-like"/>
    <property type="match status" value="1"/>
</dbReference>
<dbReference type="PROSITE" id="PS00801">
    <property type="entry name" value="TRANSKETOLASE_1"/>
    <property type="match status" value="1"/>
</dbReference>
<dbReference type="PROSITE" id="PS00802">
    <property type="entry name" value="TRANSKETOLASE_2"/>
    <property type="match status" value="1"/>
</dbReference>
<keyword id="KW-0414">Isoprene biosynthesis</keyword>
<keyword id="KW-0460">Magnesium</keyword>
<keyword id="KW-0479">Metal-binding</keyword>
<keyword id="KW-1185">Reference proteome</keyword>
<keyword id="KW-0784">Thiamine biosynthesis</keyword>
<keyword id="KW-0786">Thiamine pyrophosphate</keyword>
<keyword id="KW-0808">Transferase</keyword>
<organism>
    <name type="scientific">Halalkalibacterium halodurans (strain ATCC BAA-125 / DSM 18197 / FERM 7344 / JCM 9153 / C-125)</name>
    <name type="common">Bacillus halodurans</name>
    <dbReference type="NCBI Taxonomy" id="272558"/>
    <lineage>
        <taxon>Bacteria</taxon>
        <taxon>Bacillati</taxon>
        <taxon>Bacillota</taxon>
        <taxon>Bacilli</taxon>
        <taxon>Bacillales</taxon>
        <taxon>Bacillaceae</taxon>
        <taxon>Halalkalibacterium (ex Joshi et al. 2022)</taxon>
    </lineage>
</organism>
<reference key="1">
    <citation type="journal article" date="2000" name="Nucleic Acids Res.">
        <title>Complete genome sequence of the alkaliphilic bacterium Bacillus halodurans and genomic sequence comparison with Bacillus subtilis.</title>
        <authorList>
            <person name="Takami H."/>
            <person name="Nakasone K."/>
            <person name="Takaki Y."/>
            <person name="Maeno G."/>
            <person name="Sasaki R."/>
            <person name="Masui N."/>
            <person name="Fuji F."/>
            <person name="Hirama C."/>
            <person name="Nakamura Y."/>
            <person name="Ogasawara N."/>
            <person name="Kuhara S."/>
            <person name="Horikoshi K."/>
        </authorList>
    </citation>
    <scope>NUCLEOTIDE SEQUENCE [LARGE SCALE GENOMIC DNA]</scope>
    <source>
        <strain>ATCC BAA-125 / DSM 18197 / FERM 7344 / JCM 9153 / C-125</strain>
    </source>
</reference>
<comment type="function">
    <text evidence="1">Catalyzes the acyloin condensation reaction between C atoms 2 and 3 of pyruvate and glyceraldehyde 3-phosphate to yield 1-deoxy-D-xylulose-5-phosphate (DXP).</text>
</comment>
<comment type="catalytic activity">
    <reaction evidence="1">
        <text>D-glyceraldehyde 3-phosphate + pyruvate + H(+) = 1-deoxy-D-xylulose 5-phosphate + CO2</text>
        <dbReference type="Rhea" id="RHEA:12605"/>
        <dbReference type="ChEBI" id="CHEBI:15361"/>
        <dbReference type="ChEBI" id="CHEBI:15378"/>
        <dbReference type="ChEBI" id="CHEBI:16526"/>
        <dbReference type="ChEBI" id="CHEBI:57792"/>
        <dbReference type="ChEBI" id="CHEBI:59776"/>
        <dbReference type="EC" id="2.2.1.7"/>
    </reaction>
</comment>
<comment type="cofactor">
    <cofactor evidence="1">
        <name>Mg(2+)</name>
        <dbReference type="ChEBI" id="CHEBI:18420"/>
    </cofactor>
    <text evidence="1">Binds 1 Mg(2+) ion per subunit.</text>
</comment>
<comment type="cofactor">
    <cofactor evidence="1">
        <name>thiamine diphosphate</name>
        <dbReference type="ChEBI" id="CHEBI:58937"/>
    </cofactor>
    <text evidence="1">Binds 1 thiamine pyrophosphate per subunit.</text>
</comment>
<comment type="pathway">
    <text evidence="1">Metabolic intermediate biosynthesis; 1-deoxy-D-xylulose 5-phosphate biosynthesis; 1-deoxy-D-xylulose 5-phosphate from D-glyceraldehyde 3-phosphate and pyruvate: step 1/1.</text>
</comment>
<comment type="subunit">
    <text evidence="1">Homodimer.</text>
</comment>
<comment type="similarity">
    <text evidence="1">Belongs to the transketolase family. DXPS subfamily.</text>
</comment>
<name>DXS_HALH5</name>
<feature type="chain" id="PRO_0000189085" description="1-deoxy-D-xylulose-5-phosphate synthase">
    <location>
        <begin position="1"/>
        <end position="629"/>
    </location>
</feature>
<feature type="binding site" evidence="1">
    <location>
        <position position="72"/>
    </location>
    <ligand>
        <name>thiamine diphosphate</name>
        <dbReference type="ChEBI" id="CHEBI:58937"/>
    </ligand>
</feature>
<feature type="binding site" evidence="1">
    <location>
        <begin position="113"/>
        <end position="115"/>
    </location>
    <ligand>
        <name>thiamine diphosphate</name>
        <dbReference type="ChEBI" id="CHEBI:58937"/>
    </ligand>
</feature>
<feature type="binding site" evidence="1">
    <location>
        <position position="144"/>
    </location>
    <ligand>
        <name>Mg(2+)</name>
        <dbReference type="ChEBI" id="CHEBI:18420"/>
    </ligand>
</feature>
<feature type="binding site" evidence="1">
    <location>
        <begin position="145"/>
        <end position="146"/>
    </location>
    <ligand>
        <name>thiamine diphosphate</name>
        <dbReference type="ChEBI" id="CHEBI:58937"/>
    </ligand>
</feature>
<feature type="binding site" evidence="1">
    <location>
        <position position="173"/>
    </location>
    <ligand>
        <name>Mg(2+)</name>
        <dbReference type="ChEBI" id="CHEBI:18420"/>
    </ligand>
</feature>
<feature type="binding site" evidence="1">
    <location>
        <position position="173"/>
    </location>
    <ligand>
        <name>thiamine diphosphate</name>
        <dbReference type="ChEBI" id="CHEBI:58937"/>
    </ligand>
</feature>
<feature type="binding site" evidence="1">
    <location>
        <position position="284"/>
    </location>
    <ligand>
        <name>thiamine diphosphate</name>
        <dbReference type="ChEBI" id="CHEBI:58937"/>
    </ligand>
</feature>
<feature type="binding site" evidence="1">
    <location>
        <position position="366"/>
    </location>
    <ligand>
        <name>thiamine diphosphate</name>
        <dbReference type="ChEBI" id="CHEBI:58937"/>
    </ligand>
</feature>
<sequence>MDLEKLHDPSLIKSMTKQELEQLAEEIRQFLIEKLSITGGHLGPNLGVVELTLALHSLFDSPKDKLIWDVGHQAYVHKILTGRAGQFDQLRQYKGLCGFPKRDESEHDVWETGHSSTSLSAAMGMATARDLKGTDENVIAIIGDGALTGGMALEALNHIGHEQKDLIVVLNDNEMSIAPNVGALHNVLGRLRTAGKYQKAKEDLEMLIKKIPAFGGKLAQAAERVKDSLKYLLVSGIFFEEMGFTYLGPVDGHDLDDLMENLKYAKKTKGPVLIHVLTKKGKGYAPAENDEKGTWHGVGHYKIESGELVKKPAPPSYSGVFAETLKKIARNDPRIVALTAAMPGGTKLDQFAKEFPDRMFDVGIAEQHATTMAGGLATQGLKPVFAVYSTFLQRGYDQVVHDICRQNLNVFFAIDRAGLVGADGETHQGVFDIAYLRHLPNMKILMPKDENELQHMVYTAIQYEGGPIAVRYPRGNGYGIKMDEVLKEIPIGSWEVLQEGTDACILTFGTMIPVAEQASKELSQQGYSIRLINARSVKPLDEAMLHEIAKSGRPVLTLEETAVQGSFGSAVLEFFHDHGYHNVVTQRMGIPDRFIEHGSVSELLEEIGLTSSQVANQLSKLLPRKQKRA</sequence>
<gene>
    <name evidence="1" type="primary">dxs</name>
    <name type="ordered locus">BH2779</name>
</gene>
<evidence type="ECO:0000255" key="1">
    <source>
        <dbReference type="HAMAP-Rule" id="MF_00315"/>
    </source>
</evidence>
<accession>Q9K971</accession>
<proteinExistence type="inferred from homology"/>